<evidence type="ECO:0000255" key="1">
    <source>
        <dbReference type="HAMAP-Rule" id="MF_00049"/>
    </source>
</evidence>
<organism>
    <name type="scientific">Helicobacter acinonychis (strain Sheeba)</name>
    <dbReference type="NCBI Taxonomy" id="382638"/>
    <lineage>
        <taxon>Bacteria</taxon>
        <taxon>Pseudomonadati</taxon>
        <taxon>Campylobacterota</taxon>
        <taxon>Epsilonproteobacteria</taxon>
        <taxon>Campylobacterales</taxon>
        <taxon>Helicobacteraceae</taxon>
        <taxon>Helicobacter</taxon>
    </lineage>
</organism>
<comment type="catalytic activity">
    <reaction evidence="1">
        <text>tRNA(Leu) + L-leucine + ATP = L-leucyl-tRNA(Leu) + AMP + diphosphate</text>
        <dbReference type="Rhea" id="RHEA:11688"/>
        <dbReference type="Rhea" id="RHEA-COMP:9613"/>
        <dbReference type="Rhea" id="RHEA-COMP:9622"/>
        <dbReference type="ChEBI" id="CHEBI:30616"/>
        <dbReference type="ChEBI" id="CHEBI:33019"/>
        <dbReference type="ChEBI" id="CHEBI:57427"/>
        <dbReference type="ChEBI" id="CHEBI:78442"/>
        <dbReference type="ChEBI" id="CHEBI:78494"/>
        <dbReference type="ChEBI" id="CHEBI:456215"/>
        <dbReference type="EC" id="6.1.1.4"/>
    </reaction>
</comment>
<comment type="subcellular location">
    <subcellularLocation>
        <location evidence="1">Cytoplasm</location>
    </subcellularLocation>
</comment>
<comment type="similarity">
    <text evidence="1">Belongs to the class-I aminoacyl-tRNA synthetase family.</text>
</comment>
<accession>Q17YZ0</accession>
<protein>
    <recommendedName>
        <fullName evidence="1">Leucine--tRNA ligase</fullName>
        <ecNumber evidence="1">6.1.1.4</ecNumber>
    </recommendedName>
    <alternativeName>
        <fullName evidence="1">Leucyl-tRNA synthetase</fullName>
        <shortName evidence="1">LeuRS</shortName>
    </alternativeName>
</protein>
<proteinExistence type="inferred from homology"/>
<reference key="1">
    <citation type="journal article" date="2006" name="PLoS Genet.">
        <title>Who ate whom? Adaptive Helicobacter genomic changes that accompanied a host jump from early humans to large felines.</title>
        <authorList>
            <person name="Eppinger M."/>
            <person name="Baar C."/>
            <person name="Linz B."/>
            <person name="Raddatz G."/>
            <person name="Lanz C."/>
            <person name="Keller H."/>
            <person name="Morelli G."/>
            <person name="Gressmann H."/>
            <person name="Achtman M."/>
            <person name="Schuster S.C."/>
        </authorList>
    </citation>
    <scope>NUCLEOTIDE SEQUENCE [LARGE SCALE GENOMIC DNA]</scope>
    <source>
        <strain>Sheeba</strain>
    </source>
</reference>
<name>SYL_HELAH</name>
<gene>
    <name evidence="1" type="primary">leuS</name>
    <name type="ordered locus">Hac_0293</name>
</gene>
<sequence>MDFVSIEKKWQEFWHQNESFEPKDDFNLPKKYILSMLPYPSGEIHMGHVRNYTIGDALVRYYRLHHYNVLHPMGFDSFGMPAENAAIKHGIHPKTWTYENIENMQKEFEALGFSFSKNREFATSDPNYTEFEQQFFIDLWEKGLIYRKKAMLNWCPNDKTVLANEQVIEGRCWRCDTEVVQKELYQYYLKITNYAEELLKDLETLKNHWPSQVLLMQKNWIGKSSGLQFRFKIADECLKACNDIQEIEVFTTRADTIYGVTYIAIAPEHPLVEHAIKQVNQEDLKTIKAILNTTPRERTLEKKGAFLGIYAIHPLTKQKIPIWVANFALANYGSGALMGVPACDERDFEFANLYHIPIKVITQSPQNLPHTKEETLKNSGEWSDLPSSVAREKIIAYFEKENLGKRVINYRLQDWGVSRQRYWGAPIPMIHCKNCGIVPETQLPVTLPEDIVIDGEGNPLEKHASWKFTQCPKCHKDALRETDTMDTFIQSSWYFLRYTTPKNQRENQAFDKNYLKYFMPVDTYIGGIEHAILHLLYARFFTKALRDLGYIDLDEPFKQLITQGMVLKDGVKMSKSKGNVVSPKEILKKYGADAARLFILFAAPPAKELEWNDSALEGAHRFIKRLYDKANAINPTTYKPEFKEANLNEAEKLARKKVYEALKKSHEIFNNPESTYAFNTLIASCMEALNALNTQNNERILCEGYFVLLQVLEPMIPHTAWELSERLFKRANFKPITIDESALIEDSMTLALTINGKRRAELKVHINASKEEILALAKKELEKYLENASVKKEIYVPNKLVNFVIA</sequence>
<keyword id="KW-0030">Aminoacyl-tRNA synthetase</keyword>
<keyword id="KW-0067">ATP-binding</keyword>
<keyword id="KW-0963">Cytoplasm</keyword>
<keyword id="KW-0436">Ligase</keyword>
<keyword id="KW-0547">Nucleotide-binding</keyword>
<keyword id="KW-0648">Protein biosynthesis</keyword>
<dbReference type="EC" id="6.1.1.4" evidence="1"/>
<dbReference type="EMBL" id="AM260522">
    <property type="protein sequence ID" value="CAJ99136.1"/>
    <property type="molecule type" value="Genomic_DNA"/>
</dbReference>
<dbReference type="RefSeq" id="WP_011577251.1">
    <property type="nucleotide sequence ID" value="NC_008229.1"/>
</dbReference>
<dbReference type="SMR" id="Q17YZ0"/>
<dbReference type="STRING" id="382638.Hac_0293"/>
<dbReference type="GeneID" id="31757808"/>
<dbReference type="KEGG" id="hac:Hac_0293"/>
<dbReference type="eggNOG" id="COG0495">
    <property type="taxonomic scope" value="Bacteria"/>
</dbReference>
<dbReference type="HOGENOM" id="CLU_004427_0_0_7"/>
<dbReference type="OrthoDB" id="9810365at2"/>
<dbReference type="BioCyc" id="HACI382638:HAC_RS01310-MONOMER"/>
<dbReference type="Proteomes" id="UP000000775">
    <property type="component" value="Chromosome"/>
</dbReference>
<dbReference type="GO" id="GO:0005829">
    <property type="term" value="C:cytosol"/>
    <property type="evidence" value="ECO:0007669"/>
    <property type="project" value="TreeGrafter"/>
</dbReference>
<dbReference type="GO" id="GO:0002161">
    <property type="term" value="F:aminoacyl-tRNA deacylase activity"/>
    <property type="evidence" value="ECO:0007669"/>
    <property type="project" value="InterPro"/>
</dbReference>
<dbReference type="GO" id="GO:0005524">
    <property type="term" value="F:ATP binding"/>
    <property type="evidence" value="ECO:0007669"/>
    <property type="project" value="UniProtKB-UniRule"/>
</dbReference>
<dbReference type="GO" id="GO:0004823">
    <property type="term" value="F:leucine-tRNA ligase activity"/>
    <property type="evidence" value="ECO:0007669"/>
    <property type="project" value="UniProtKB-UniRule"/>
</dbReference>
<dbReference type="GO" id="GO:0006429">
    <property type="term" value="P:leucyl-tRNA aminoacylation"/>
    <property type="evidence" value="ECO:0007669"/>
    <property type="project" value="UniProtKB-UniRule"/>
</dbReference>
<dbReference type="CDD" id="cd00812">
    <property type="entry name" value="LeuRS_core"/>
    <property type="match status" value="1"/>
</dbReference>
<dbReference type="FunFam" id="1.10.730.10:FF:000002">
    <property type="entry name" value="Leucine--tRNA ligase"/>
    <property type="match status" value="1"/>
</dbReference>
<dbReference type="FunFam" id="3.40.50.620:FF:000003">
    <property type="entry name" value="Leucine--tRNA ligase"/>
    <property type="match status" value="1"/>
</dbReference>
<dbReference type="FunFam" id="3.40.50.620:FF:000212">
    <property type="entry name" value="Leucine--tRNA ligase"/>
    <property type="match status" value="1"/>
</dbReference>
<dbReference type="Gene3D" id="3.10.20.590">
    <property type="match status" value="1"/>
</dbReference>
<dbReference type="Gene3D" id="3.40.50.620">
    <property type="entry name" value="HUPs"/>
    <property type="match status" value="2"/>
</dbReference>
<dbReference type="Gene3D" id="1.10.730.10">
    <property type="entry name" value="Isoleucyl-tRNA Synthetase, Domain 1"/>
    <property type="match status" value="1"/>
</dbReference>
<dbReference type="HAMAP" id="MF_00049_B">
    <property type="entry name" value="Leu_tRNA_synth_B"/>
    <property type="match status" value="1"/>
</dbReference>
<dbReference type="InterPro" id="IPR001412">
    <property type="entry name" value="aa-tRNA-synth_I_CS"/>
</dbReference>
<dbReference type="InterPro" id="IPR002300">
    <property type="entry name" value="aa-tRNA-synth_Ia"/>
</dbReference>
<dbReference type="InterPro" id="IPR002302">
    <property type="entry name" value="Leu-tRNA-ligase"/>
</dbReference>
<dbReference type="InterPro" id="IPR025709">
    <property type="entry name" value="Leu_tRNA-synth_edit"/>
</dbReference>
<dbReference type="InterPro" id="IPR015413">
    <property type="entry name" value="Methionyl/Leucyl_tRNA_Synth"/>
</dbReference>
<dbReference type="InterPro" id="IPR014729">
    <property type="entry name" value="Rossmann-like_a/b/a_fold"/>
</dbReference>
<dbReference type="InterPro" id="IPR009080">
    <property type="entry name" value="tRNAsynth_Ia_anticodon-bd"/>
</dbReference>
<dbReference type="InterPro" id="IPR009008">
    <property type="entry name" value="Val/Leu/Ile-tRNA-synth_edit"/>
</dbReference>
<dbReference type="NCBIfam" id="TIGR00396">
    <property type="entry name" value="leuS_bact"/>
    <property type="match status" value="1"/>
</dbReference>
<dbReference type="PANTHER" id="PTHR43740:SF2">
    <property type="entry name" value="LEUCINE--TRNA LIGASE, MITOCHONDRIAL"/>
    <property type="match status" value="1"/>
</dbReference>
<dbReference type="PANTHER" id="PTHR43740">
    <property type="entry name" value="LEUCYL-TRNA SYNTHETASE"/>
    <property type="match status" value="1"/>
</dbReference>
<dbReference type="Pfam" id="PF00133">
    <property type="entry name" value="tRNA-synt_1"/>
    <property type="match status" value="1"/>
</dbReference>
<dbReference type="Pfam" id="PF13603">
    <property type="entry name" value="tRNA-synt_1_2"/>
    <property type="match status" value="1"/>
</dbReference>
<dbReference type="Pfam" id="PF09334">
    <property type="entry name" value="tRNA-synt_1g"/>
    <property type="match status" value="1"/>
</dbReference>
<dbReference type="PRINTS" id="PR00985">
    <property type="entry name" value="TRNASYNTHLEU"/>
</dbReference>
<dbReference type="SUPFAM" id="SSF47323">
    <property type="entry name" value="Anticodon-binding domain of a subclass of class I aminoacyl-tRNA synthetases"/>
    <property type="match status" value="1"/>
</dbReference>
<dbReference type="SUPFAM" id="SSF52374">
    <property type="entry name" value="Nucleotidylyl transferase"/>
    <property type="match status" value="1"/>
</dbReference>
<dbReference type="SUPFAM" id="SSF50677">
    <property type="entry name" value="ValRS/IleRS/LeuRS editing domain"/>
    <property type="match status" value="1"/>
</dbReference>
<dbReference type="PROSITE" id="PS00178">
    <property type="entry name" value="AA_TRNA_LIGASE_I"/>
    <property type="match status" value="1"/>
</dbReference>
<feature type="chain" id="PRO_0000334762" description="Leucine--tRNA ligase">
    <location>
        <begin position="1"/>
        <end position="806"/>
    </location>
</feature>
<feature type="short sequence motif" description="'HIGH' region">
    <location>
        <begin position="38"/>
        <end position="48"/>
    </location>
</feature>
<feature type="short sequence motif" description="'KMSKS' region">
    <location>
        <begin position="572"/>
        <end position="576"/>
    </location>
</feature>
<feature type="binding site" evidence="1">
    <location>
        <position position="575"/>
    </location>
    <ligand>
        <name>ATP</name>
        <dbReference type="ChEBI" id="CHEBI:30616"/>
    </ligand>
</feature>